<reference key="1">
    <citation type="journal article" date="2004" name="Proc. Natl. Acad. Sci. U.S.A.">
        <title>Structural flexibility in the Burkholderia mallei genome.</title>
        <authorList>
            <person name="Nierman W.C."/>
            <person name="DeShazer D."/>
            <person name="Kim H.S."/>
            <person name="Tettelin H."/>
            <person name="Nelson K.E."/>
            <person name="Feldblyum T.V."/>
            <person name="Ulrich R.L."/>
            <person name="Ronning C.M."/>
            <person name="Brinkac L.M."/>
            <person name="Daugherty S.C."/>
            <person name="Davidsen T.D."/>
            <person name="DeBoy R.T."/>
            <person name="Dimitrov G."/>
            <person name="Dodson R.J."/>
            <person name="Durkin A.S."/>
            <person name="Gwinn M.L."/>
            <person name="Haft D.H."/>
            <person name="Khouri H.M."/>
            <person name="Kolonay J.F."/>
            <person name="Madupu R."/>
            <person name="Mohammoud Y."/>
            <person name="Nelson W.C."/>
            <person name="Radune D."/>
            <person name="Romero C.M."/>
            <person name="Sarria S."/>
            <person name="Selengut J."/>
            <person name="Shamblin C."/>
            <person name="Sullivan S.A."/>
            <person name="White O."/>
            <person name="Yu Y."/>
            <person name="Zafar N."/>
            <person name="Zhou L."/>
            <person name="Fraser C.M."/>
        </authorList>
    </citation>
    <scope>NUCLEOTIDE SEQUENCE [LARGE SCALE GENOMIC DNA]</scope>
    <source>
        <strain>ATCC 23344</strain>
    </source>
</reference>
<evidence type="ECO:0000255" key="1">
    <source>
        <dbReference type="HAMAP-Rule" id="MF_00436"/>
    </source>
</evidence>
<evidence type="ECO:0000255" key="2">
    <source>
        <dbReference type="PROSITE-ProRule" id="PRU01346"/>
    </source>
</evidence>
<protein>
    <recommendedName>
        <fullName evidence="1">RNA-binding protein Hfq</fullName>
    </recommendedName>
</protein>
<keyword id="KW-1185">Reference proteome</keyword>
<keyword id="KW-0694">RNA-binding</keyword>
<keyword id="KW-0346">Stress response</keyword>
<proteinExistence type="inferred from homology"/>
<name>HFQ_BURMA</name>
<gene>
    <name evidence="1" type="primary">hfq</name>
    <name type="ordered locus">BMA1340</name>
</gene>
<comment type="function">
    <text evidence="1">RNA chaperone that binds small regulatory RNA (sRNAs) and mRNAs to facilitate mRNA translational regulation in response to envelope stress, environmental stress and changes in metabolite concentrations. Also binds with high specificity to tRNAs.</text>
</comment>
<comment type="subunit">
    <text evidence="1">Homohexamer.</text>
</comment>
<comment type="similarity">
    <text evidence="1">Belongs to the Hfq family.</text>
</comment>
<sequence length="79" mass="8833">MSNKGQLLQDPFLNALRKEHVPVSIYLVNGIKLQGNIESFDQYVVLLRNTVTQMVYKHAISTVVPARPVNFHPDAEAAS</sequence>
<feature type="chain" id="PRO_0000095631" description="RNA-binding protein Hfq">
    <location>
        <begin position="1"/>
        <end position="79"/>
    </location>
</feature>
<feature type="domain" description="Sm" evidence="2">
    <location>
        <begin position="10"/>
        <end position="69"/>
    </location>
</feature>
<dbReference type="EMBL" id="CP000010">
    <property type="protein sequence ID" value="AAU47553.1"/>
    <property type="molecule type" value="Genomic_DNA"/>
</dbReference>
<dbReference type="RefSeq" id="WP_004192796.1">
    <property type="nucleotide sequence ID" value="NC_006348.1"/>
</dbReference>
<dbReference type="RefSeq" id="YP_103000.1">
    <property type="nucleotide sequence ID" value="NC_006348.1"/>
</dbReference>
<dbReference type="SMR" id="Q62JW9"/>
<dbReference type="GeneID" id="93060471"/>
<dbReference type="KEGG" id="bma:BMA1340"/>
<dbReference type="PATRIC" id="fig|243160.12.peg.1378"/>
<dbReference type="eggNOG" id="COG1923">
    <property type="taxonomic scope" value="Bacteria"/>
</dbReference>
<dbReference type="HOGENOM" id="CLU_113688_2_2_4"/>
<dbReference type="Proteomes" id="UP000006693">
    <property type="component" value="Chromosome 1"/>
</dbReference>
<dbReference type="GO" id="GO:0005829">
    <property type="term" value="C:cytosol"/>
    <property type="evidence" value="ECO:0007669"/>
    <property type="project" value="TreeGrafter"/>
</dbReference>
<dbReference type="GO" id="GO:0003723">
    <property type="term" value="F:RNA binding"/>
    <property type="evidence" value="ECO:0007669"/>
    <property type="project" value="UniProtKB-UniRule"/>
</dbReference>
<dbReference type="GO" id="GO:0006355">
    <property type="term" value="P:regulation of DNA-templated transcription"/>
    <property type="evidence" value="ECO:0007669"/>
    <property type="project" value="InterPro"/>
</dbReference>
<dbReference type="GO" id="GO:0043487">
    <property type="term" value="P:regulation of RNA stability"/>
    <property type="evidence" value="ECO:0007669"/>
    <property type="project" value="TreeGrafter"/>
</dbReference>
<dbReference type="GO" id="GO:0045974">
    <property type="term" value="P:regulation of translation, ncRNA-mediated"/>
    <property type="evidence" value="ECO:0007669"/>
    <property type="project" value="TreeGrafter"/>
</dbReference>
<dbReference type="CDD" id="cd01716">
    <property type="entry name" value="Hfq"/>
    <property type="match status" value="1"/>
</dbReference>
<dbReference type="FunFam" id="2.30.30.100:FF:000001">
    <property type="entry name" value="RNA-binding protein Hfq"/>
    <property type="match status" value="1"/>
</dbReference>
<dbReference type="Gene3D" id="2.30.30.100">
    <property type="match status" value="1"/>
</dbReference>
<dbReference type="HAMAP" id="MF_00436">
    <property type="entry name" value="Hfq"/>
    <property type="match status" value="1"/>
</dbReference>
<dbReference type="InterPro" id="IPR005001">
    <property type="entry name" value="Hfq"/>
</dbReference>
<dbReference type="InterPro" id="IPR010920">
    <property type="entry name" value="LSM_dom_sf"/>
</dbReference>
<dbReference type="InterPro" id="IPR047575">
    <property type="entry name" value="Sm"/>
</dbReference>
<dbReference type="NCBIfam" id="TIGR02383">
    <property type="entry name" value="Hfq"/>
    <property type="match status" value="1"/>
</dbReference>
<dbReference type="NCBIfam" id="NF001602">
    <property type="entry name" value="PRK00395.1"/>
    <property type="match status" value="1"/>
</dbReference>
<dbReference type="PANTHER" id="PTHR34772">
    <property type="entry name" value="RNA-BINDING PROTEIN HFQ"/>
    <property type="match status" value="1"/>
</dbReference>
<dbReference type="PANTHER" id="PTHR34772:SF1">
    <property type="entry name" value="RNA-BINDING PROTEIN HFQ"/>
    <property type="match status" value="1"/>
</dbReference>
<dbReference type="Pfam" id="PF17209">
    <property type="entry name" value="Hfq"/>
    <property type="match status" value="1"/>
</dbReference>
<dbReference type="SUPFAM" id="SSF50182">
    <property type="entry name" value="Sm-like ribonucleoproteins"/>
    <property type="match status" value="1"/>
</dbReference>
<dbReference type="PROSITE" id="PS52002">
    <property type="entry name" value="SM"/>
    <property type="match status" value="1"/>
</dbReference>
<organism>
    <name type="scientific">Burkholderia mallei (strain ATCC 23344)</name>
    <dbReference type="NCBI Taxonomy" id="243160"/>
    <lineage>
        <taxon>Bacteria</taxon>
        <taxon>Pseudomonadati</taxon>
        <taxon>Pseudomonadota</taxon>
        <taxon>Betaproteobacteria</taxon>
        <taxon>Burkholderiales</taxon>
        <taxon>Burkholderiaceae</taxon>
        <taxon>Burkholderia</taxon>
        <taxon>pseudomallei group</taxon>
    </lineage>
</organism>
<accession>Q62JW9</accession>